<evidence type="ECO:0000255" key="1">
    <source>
        <dbReference type="HAMAP-Rule" id="MF_00096"/>
    </source>
</evidence>
<sequence>MAKEKISPGMQQYLDIKKNYPDAFLLFRMGDFYELFYDDAVKAAQILEISLTSRNKNADNPIPMAGVPYHSAQAYIDVLVEMGYKVAIAEQMEDPKQAVGVVKREVVQVITPGTVVDSSKPDSANNFLVAIDKVGSRFGLSYMDVSTGEFFATELDDFSSVCSEIQNLKAREVVVGYDLLETDEQVLVNQLNLLLSKETEGYDDVHLIGNSLTDLESSVASKLLQYVHRTQMRELSHLQKAQHYEIKDYLQMSYATKSSLDLLENARTGKKHGSLFWLLDKTKTAMGMRLLRTWIDRPLVNQASIIERQNIIQVFLDNFFERSDLTESLKGVYDIERLASRVSFGKANPKDLIQLGHTLAQVPIIKAILESFNDDALSGLLQELDALPELESLIRSAIDPDAPATITEGGIIRDGFDETLDKYRKVMSEGTSWIADIEAKEREASGITTLKIDYNRKDGYYFHVTNSNLSLVPDHFFRKATLKNSERFGTAELAKIEGEMLEAREKSSTLEYDIFMRVREQVERYIDRLQSLAKAIATVDVLQSLAVTAETNHYVRPVFNDEHRIAIDRGRHAVVEKVMGVQEYIPNTITFDSQTNIQLITGPNMSGKSTYMRQLALSVVMAQMGAYVPADSVDLPVFDAIYTRIGAADDLISGQSTFMVEMMEANQAIKRATPNSLIIFDELGRGTATYDGMALAQSIIEFIHDKVGAKTMFATHYHELTALSNSLTHLVNVHVATLEKDGEVTFLHKIVDGPADKSYGIHVAKIAGLPTDLLNRADTILTQLEGETVVIQPQEKVSSQEKPAIETHVNEQISLFDDFTENPVLQELRDLDIYNMTPMQVMMAVADLKQKL</sequence>
<feature type="chain" id="PRO_1000008113" description="DNA mismatch repair protein MutS">
    <location>
        <begin position="1"/>
        <end position="852"/>
    </location>
</feature>
<feature type="binding site" evidence="1">
    <location>
        <begin position="602"/>
        <end position="609"/>
    </location>
    <ligand>
        <name>ATP</name>
        <dbReference type="ChEBI" id="CHEBI:30616"/>
    </ligand>
</feature>
<proteinExistence type="inferred from homology"/>
<protein>
    <recommendedName>
        <fullName evidence="1">DNA mismatch repair protein MutS</fullName>
    </recommendedName>
</protein>
<organism>
    <name type="scientific">Streptococcus thermophilus (strain ATCC BAA-491 / LMD-9)</name>
    <dbReference type="NCBI Taxonomy" id="322159"/>
    <lineage>
        <taxon>Bacteria</taxon>
        <taxon>Bacillati</taxon>
        <taxon>Bacillota</taxon>
        <taxon>Bacilli</taxon>
        <taxon>Lactobacillales</taxon>
        <taxon>Streptococcaceae</taxon>
        <taxon>Streptococcus</taxon>
    </lineage>
</organism>
<accession>Q03MY4</accession>
<gene>
    <name evidence="1" type="primary">mutS</name>
    <name type="ordered locus">STER_0068</name>
</gene>
<dbReference type="EMBL" id="CP000419">
    <property type="protein sequence ID" value="ABJ65438.1"/>
    <property type="molecule type" value="Genomic_DNA"/>
</dbReference>
<dbReference type="RefSeq" id="WP_011680597.1">
    <property type="nucleotide sequence ID" value="NC_008532.1"/>
</dbReference>
<dbReference type="SMR" id="Q03MY4"/>
<dbReference type="KEGG" id="ste:STER_0068"/>
<dbReference type="HOGENOM" id="CLU_002472_3_1_9"/>
<dbReference type="GO" id="GO:0005829">
    <property type="term" value="C:cytosol"/>
    <property type="evidence" value="ECO:0007669"/>
    <property type="project" value="TreeGrafter"/>
</dbReference>
<dbReference type="GO" id="GO:0005524">
    <property type="term" value="F:ATP binding"/>
    <property type="evidence" value="ECO:0007669"/>
    <property type="project" value="UniProtKB-UniRule"/>
</dbReference>
<dbReference type="GO" id="GO:0140664">
    <property type="term" value="F:ATP-dependent DNA damage sensor activity"/>
    <property type="evidence" value="ECO:0007669"/>
    <property type="project" value="InterPro"/>
</dbReference>
<dbReference type="GO" id="GO:0003684">
    <property type="term" value="F:damaged DNA binding"/>
    <property type="evidence" value="ECO:0007669"/>
    <property type="project" value="UniProtKB-UniRule"/>
</dbReference>
<dbReference type="GO" id="GO:0030983">
    <property type="term" value="F:mismatched DNA binding"/>
    <property type="evidence" value="ECO:0007669"/>
    <property type="project" value="InterPro"/>
</dbReference>
<dbReference type="GO" id="GO:0006298">
    <property type="term" value="P:mismatch repair"/>
    <property type="evidence" value="ECO:0007669"/>
    <property type="project" value="UniProtKB-UniRule"/>
</dbReference>
<dbReference type="CDD" id="cd03284">
    <property type="entry name" value="ABC_MutS1"/>
    <property type="match status" value="1"/>
</dbReference>
<dbReference type="FunFam" id="1.10.1420.10:FF:000001">
    <property type="entry name" value="DNA mismatch repair protein MutS"/>
    <property type="match status" value="1"/>
</dbReference>
<dbReference type="FunFam" id="3.40.1170.10:FF:000001">
    <property type="entry name" value="DNA mismatch repair protein MutS"/>
    <property type="match status" value="1"/>
</dbReference>
<dbReference type="FunFam" id="3.40.50.300:FF:000896">
    <property type="entry name" value="DNA mismatch repair protein MutS"/>
    <property type="match status" value="1"/>
</dbReference>
<dbReference type="Gene3D" id="1.10.1420.10">
    <property type="match status" value="2"/>
</dbReference>
<dbReference type="Gene3D" id="3.40.1170.10">
    <property type="entry name" value="DNA repair protein MutS, domain I"/>
    <property type="match status" value="1"/>
</dbReference>
<dbReference type="Gene3D" id="3.30.420.110">
    <property type="entry name" value="MutS, connector domain"/>
    <property type="match status" value="1"/>
</dbReference>
<dbReference type="Gene3D" id="3.40.50.300">
    <property type="entry name" value="P-loop containing nucleotide triphosphate hydrolases"/>
    <property type="match status" value="1"/>
</dbReference>
<dbReference type="HAMAP" id="MF_00096">
    <property type="entry name" value="MutS"/>
    <property type="match status" value="1"/>
</dbReference>
<dbReference type="InterPro" id="IPR005748">
    <property type="entry name" value="DNA_mismatch_repair_MutS"/>
</dbReference>
<dbReference type="InterPro" id="IPR007695">
    <property type="entry name" value="DNA_mismatch_repair_MutS-lik_N"/>
</dbReference>
<dbReference type="InterPro" id="IPR017261">
    <property type="entry name" value="DNA_mismatch_repair_MutS/MSH"/>
</dbReference>
<dbReference type="InterPro" id="IPR000432">
    <property type="entry name" value="DNA_mismatch_repair_MutS_C"/>
</dbReference>
<dbReference type="InterPro" id="IPR007861">
    <property type="entry name" value="DNA_mismatch_repair_MutS_clamp"/>
</dbReference>
<dbReference type="InterPro" id="IPR007696">
    <property type="entry name" value="DNA_mismatch_repair_MutS_core"/>
</dbReference>
<dbReference type="InterPro" id="IPR016151">
    <property type="entry name" value="DNA_mismatch_repair_MutS_N"/>
</dbReference>
<dbReference type="InterPro" id="IPR036187">
    <property type="entry name" value="DNA_mismatch_repair_MutS_sf"/>
</dbReference>
<dbReference type="InterPro" id="IPR007860">
    <property type="entry name" value="DNA_mmatch_repair_MutS_con_dom"/>
</dbReference>
<dbReference type="InterPro" id="IPR045076">
    <property type="entry name" value="MutS"/>
</dbReference>
<dbReference type="InterPro" id="IPR036678">
    <property type="entry name" value="MutS_con_dom_sf"/>
</dbReference>
<dbReference type="InterPro" id="IPR027417">
    <property type="entry name" value="P-loop_NTPase"/>
</dbReference>
<dbReference type="NCBIfam" id="TIGR01070">
    <property type="entry name" value="mutS1"/>
    <property type="match status" value="1"/>
</dbReference>
<dbReference type="NCBIfam" id="NF003810">
    <property type="entry name" value="PRK05399.1"/>
    <property type="match status" value="1"/>
</dbReference>
<dbReference type="PANTHER" id="PTHR11361:SF34">
    <property type="entry name" value="DNA MISMATCH REPAIR PROTEIN MSH1, MITOCHONDRIAL"/>
    <property type="match status" value="1"/>
</dbReference>
<dbReference type="PANTHER" id="PTHR11361">
    <property type="entry name" value="DNA MISMATCH REPAIR PROTEIN MUTS FAMILY MEMBER"/>
    <property type="match status" value="1"/>
</dbReference>
<dbReference type="Pfam" id="PF01624">
    <property type="entry name" value="MutS_I"/>
    <property type="match status" value="1"/>
</dbReference>
<dbReference type="Pfam" id="PF05188">
    <property type="entry name" value="MutS_II"/>
    <property type="match status" value="1"/>
</dbReference>
<dbReference type="Pfam" id="PF05192">
    <property type="entry name" value="MutS_III"/>
    <property type="match status" value="1"/>
</dbReference>
<dbReference type="Pfam" id="PF05190">
    <property type="entry name" value="MutS_IV"/>
    <property type="match status" value="1"/>
</dbReference>
<dbReference type="Pfam" id="PF00488">
    <property type="entry name" value="MutS_V"/>
    <property type="match status" value="1"/>
</dbReference>
<dbReference type="PIRSF" id="PIRSF037677">
    <property type="entry name" value="DNA_mis_repair_Msh6"/>
    <property type="match status" value="1"/>
</dbReference>
<dbReference type="SMART" id="SM00534">
    <property type="entry name" value="MUTSac"/>
    <property type="match status" value="1"/>
</dbReference>
<dbReference type="SMART" id="SM00533">
    <property type="entry name" value="MUTSd"/>
    <property type="match status" value="1"/>
</dbReference>
<dbReference type="SUPFAM" id="SSF55271">
    <property type="entry name" value="DNA repair protein MutS, domain I"/>
    <property type="match status" value="1"/>
</dbReference>
<dbReference type="SUPFAM" id="SSF53150">
    <property type="entry name" value="DNA repair protein MutS, domain II"/>
    <property type="match status" value="1"/>
</dbReference>
<dbReference type="SUPFAM" id="SSF48334">
    <property type="entry name" value="DNA repair protein MutS, domain III"/>
    <property type="match status" value="1"/>
</dbReference>
<dbReference type="SUPFAM" id="SSF52540">
    <property type="entry name" value="P-loop containing nucleoside triphosphate hydrolases"/>
    <property type="match status" value="1"/>
</dbReference>
<dbReference type="PROSITE" id="PS00486">
    <property type="entry name" value="DNA_MISMATCH_REPAIR_2"/>
    <property type="match status" value="1"/>
</dbReference>
<name>MUTS_STRTD</name>
<comment type="function">
    <text evidence="1">This protein is involved in the repair of mismatches in DNA. It is possible that it carries out the mismatch recognition step. This protein has a weak ATPase activity.</text>
</comment>
<comment type="similarity">
    <text evidence="1">Belongs to the DNA mismatch repair MutS family.</text>
</comment>
<reference key="1">
    <citation type="journal article" date="2006" name="Proc. Natl. Acad. Sci. U.S.A.">
        <title>Comparative genomics of the lactic acid bacteria.</title>
        <authorList>
            <person name="Makarova K.S."/>
            <person name="Slesarev A."/>
            <person name="Wolf Y.I."/>
            <person name="Sorokin A."/>
            <person name="Mirkin B."/>
            <person name="Koonin E.V."/>
            <person name="Pavlov A."/>
            <person name="Pavlova N."/>
            <person name="Karamychev V."/>
            <person name="Polouchine N."/>
            <person name="Shakhova V."/>
            <person name="Grigoriev I."/>
            <person name="Lou Y."/>
            <person name="Rohksar D."/>
            <person name="Lucas S."/>
            <person name="Huang K."/>
            <person name="Goodstein D.M."/>
            <person name="Hawkins T."/>
            <person name="Plengvidhya V."/>
            <person name="Welker D."/>
            <person name="Hughes J."/>
            <person name="Goh Y."/>
            <person name="Benson A."/>
            <person name="Baldwin K."/>
            <person name="Lee J.-H."/>
            <person name="Diaz-Muniz I."/>
            <person name="Dosti B."/>
            <person name="Smeianov V."/>
            <person name="Wechter W."/>
            <person name="Barabote R."/>
            <person name="Lorca G."/>
            <person name="Altermann E."/>
            <person name="Barrangou R."/>
            <person name="Ganesan B."/>
            <person name="Xie Y."/>
            <person name="Rawsthorne H."/>
            <person name="Tamir D."/>
            <person name="Parker C."/>
            <person name="Breidt F."/>
            <person name="Broadbent J.R."/>
            <person name="Hutkins R."/>
            <person name="O'Sullivan D."/>
            <person name="Steele J."/>
            <person name="Unlu G."/>
            <person name="Saier M.H. Jr."/>
            <person name="Klaenhammer T."/>
            <person name="Richardson P."/>
            <person name="Kozyavkin S."/>
            <person name="Weimer B.C."/>
            <person name="Mills D.A."/>
        </authorList>
    </citation>
    <scope>NUCLEOTIDE SEQUENCE [LARGE SCALE GENOMIC DNA]</scope>
    <source>
        <strain>ATCC BAA-491 / LMD-9</strain>
    </source>
</reference>
<keyword id="KW-0067">ATP-binding</keyword>
<keyword id="KW-0227">DNA damage</keyword>
<keyword id="KW-0234">DNA repair</keyword>
<keyword id="KW-0238">DNA-binding</keyword>
<keyword id="KW-0547">Nucleotide-binding</keyword>